<comment type="function">
    <text evidence="1">3'-to-5' exoribonuclease specific for small oligoribonucleotides.</text>
</comment>
<comment type="subcellular location">
    <subcellularLocation>
        <location evidence="1">Cytoplasm</location>
    </subcellularLocation>
</comment>
<comment type="similarity">
    <text evidence="1">Belongs to the oligoribonuclease family.</text>
</comment>
<name>ORN_PSEPF</name>
<gene>
    <name evidence="1" type="primary">orn</name>
    <name type="ordered locus">Pfl01_0515</name>
</gene>
<organism>
    <name type="scientific">Pseudomonas fluorescens (strain Pf0-1)</name>
    <dbReference type="NCBI Taxonomy" id="205922"/>
    <lineage>
        <taxon>Bacteria</taxon>
        <taxon>Pseudomonadati</taxon>
        <taxon>Pseudomonadota</taxon>
        <taxon>Gammaproteobacteria</taxon>
        <taxon>Pseudomonadales</taxon>
        <taxon>Pseudomonadaceae</taxon>
        <taxon>Pseudomonas</taxon>
    </lineage>
</organism>
<keyword id="KW-0963">Cytoplasm</keyword>
<keyword id="KW-0269">Exonuclease</keyword>
<keyword id="KW-0378">Hydrolase</keyword>
<keyword id="KW-0540">Nuclease</keyword>
<protein>
    <recommendedName>
        <fullName evidence="1">Oligoribonuclease</fullName>
        <ecNumber evidence="1">3.1.15.-</ecNumber>
    </recommendedName>
</protein>
<accession>Q3KIZ7</accession>
<evidence type="ECO:0000255" key="1">
    <source>
        <dbReference type="HAMAP-Rule" id="MF_00045"/>
    </source>
</evidence>
<feature type="chain" id="PRO_1000004277" description="Oligoribonuclease">
    <location>
        <begin position="1"/>
        <end position="180"/>
    </location>
</feature>
<feature type="domain" description="Exonuclease" evidence="1">
    <location>
        <begin position="7"/>
        <end position="170"/>
    </location>
</feature>
<feature type="active site" evidence="1">
    <location>
        <position position="128"/>
    </location>
</feature>
<proteinExistence type="inferred from homology"/>
<sequence length="180" mass="20711">MQNPQNLIWIDLEMTGLDPENDVIIEMATIVTDSDLNTLAEGPVIAIHHSDEVLARMDEWNTRTHGNSGLTQRVRESRVSMAEAEAETIAFLEQWVPKGKSPICGNSICQDRRFLYTHMKALESYFHYRNLDVSTLKELAARWAPDVRDSFKKGSTHLALDDIRESIAELQHYRKHFIKF</sequence>
<reference key="1">
    <citation type="journal article" date="2009" name="Genome Biol.">
        <title>Genomic and genetic analyses of diversity and plant interactions of Pseudomonas fluorescens.</title>
        <authorList>
            <person name="Silby M.W."/>
            <person name="Cerdeno-Tarraga A.M."/>
            <person name="Vernikos G.S."/>
            <person name="Giddens S.R."/>
            <person name="Jackson R.W."/>
            <person name="Preston G.M."/>
            <person name="Zhang X.-X."/>
            <person name="Moon C.D."/>
            <person name="Gehrig S.M."/>
            <person name="Godfrey S.A.C."/>
            <person name="Knight C.G."/>
            <person name="Malone J.G."/>
            <person name="Robinson Z."/>
            <person name="Spiers A.J."/>
            <person name="Harris S."/>
            <person name="Challis G.L."/>
            <person name="Yaxley A.M."/>
            <person name="Harris D."/>
            <person name="Seeger K."/>
            <person name="Murphy L."/>
            <person name="Rutter S."/>
            <person name="Squares R."/>
            <person name="Quail M.A."/>
            <person name="Saunders E."/>
            <person name="Mavromatis K."/>
            <person name="Brettin T.S."/>
            <person name="Bentley S.D."/>
            <person name="Hothersall J."/>
            <person name="Stephens E."/>
            <person name="Thomas C.M."/>
            <person name="Parkhill J."/>
            <person name="Levy S.B."/>
            <person name="Rainey P.B."/>
            <person name="Thomson N.R."/>
        </authorList>
    </citation>
    <scope>NUCLEOTIDE SEQUENCE [LARGE SCALE GENOMIC DNA]</scope>
    <source>
        <strain>Pf0-1</strain>
    </source>
</reference>
<dbReference type="EC" id="3.1.15.-" evidence="1"/>
<dbReference type="EMBL" id="CP000094">
    <property type="protein sequence ID" value="ABA72259.1"/>
    <property type="molecule type" value="Genomic_DNA"/>
</dbReference>
<dbReference type="RefSeq" id="WP_011332176.1">
    <property type="nucleotide sequence ID" value="NC_007492.2"/>
</dbReference>
<dbReference type="SMR" id="Q3KIZ7"/>
<dbReference type="KEGG" id="pfo:Pfl01_0515"/>
<dbReference type="eggNOG" id="COG1949">
    <property type="taxonomic scope" value="Bacteria"/>
</dbReference>
<dbReference type="HOGENOM" id="CLU_064761_2_0_6"/>
<dbReference type="Proteomes" id="UP000002704">
    <property type="component" value="Chromosome"/>
</dbReference>
<dbReference type="GO" id="GO:0005737">
    <property type="term" value="C:cytoplasm"/>
    <property type="evidence" value="ECO:0007669"/>
    <property type="project" value="UniProtKB-SubCell"/>
</dbReference>
<dbReference type="GO" id="GO:0000175">
    <property type="term" value="F:3'-5'-RNA exonuclease activity"/>
    <property type="evidence" value="ECO:0007669"/>
    <property type="project" value="InterPro"/>
</dbReference>
<dbReference type="GO" id="GO:0003676">
    <property type="term" value="F:nucleic acid binding"/>
    <property type="evidence" value="ECO:0007669"/>
    <property type="project" value="InterPro"/>
</dbReference>
<dbReference type="GO" id="GO:0006259">
    <property type="term" value="P:DNA metabolic process"/>
    <property type="evidence" value="ECO:0007669"/>
    <property type="project" value="UniProtKB-ARBA"/>
</dbReference>
<dbReference type="CDD" id="cd06135">
    <property type="entry name" value="Orn"/>
    <property type="match status" value="1"/>
</dbReference>
<dbReference type="FunFam" id="3.30.420.10:FF:000003">
    <property type="entry name" value="Oligoribonuclease"/>
    <property type="match status" value="1"/>
</dbReference>
<dbReference type="Gene3D" id="3.30.420.10">
    <property type="entry name" value="Ribonuclease H-like superfamily/Ribonuclease H"/>
    <property type="match status" value="1"/>
</dbReference>
<dbReference type="HAMAP" id="MF_00045">
    <property type="entry name" value="Oligoribonuclease"/>
    <property type="match status" value="1"/>
</dbReference>
<dbReference type="InterPro" id="IPR013520">
    <property type="entry name" value="Exonuclease_RNaseT/DNA_pol3"/>
</dbReference>
<dbReference type="InterPro" id="IPR022894">
    <property type="entry name" value="Oligoribonuclease"/>
</dbReference>
<dbReference type="InterPro" id="IPR012337">
    <property type="entry name" value="RNaseH-like_sf"/>
</dbReference>
<dbReference type="InterPro" id="IPR036397">
    <property type="entry name" value="RNaseH_sf"/>
</dbReference>
<dbReference type="NCBIfam" id="NF003765">
    <property type="entry name" value="PRK05359.1"/>
    <property type="match status" value="1"/>
</dbReference>
<dbReference type="PANTHER" id="PTHR11046">
    <property type="entry name" value="OLIGORIBONUCLEASE, MITOCHONDRIAL"/>
    <property type="match status" value="1"/>
</dbReference>
<dbReference type="PANTHER" id="PTHR11046:SF0">
    <property type="entry name" value="OLIGORIBONUCLEASE, MITOCHONDRIAL"/>
    <property type="match status" value="1"/>
</dbReference>
<dbReference type="Pfam" id="PF00929">
    <property type="entry name" value="RNase_T"/>
    <property type="match status" value="1"/>
</dbReference>
<dbReference type="SMART" id="SM00479">
    <property type="entry name" value="EXOIII"/>
    <property type="match status" value="1"/>
</dbReference>
<dbReference type="SUPFAM" id="SSF53098">
    <property type="entry name" value="Ribonuclease H-like"/>
    <property type="match status" value="1"/>
</dbReference>